<proteinExistence type="inferred from homology"/>
<sequence length="65" mass="7357">MPKMKTKSSAKKRFKVLGNGGVKRAHAFKRHILTKKTTKNKRQLRGTSMVNDRDLASVAKMLPYA</sequence>
<dbReference type="EMBL" id="AL157959">
    <property type="protein sequence ID" value="CAM08158.1"/>
    <property type="molecule type" value="Genomic_DNA"/>
</dbReference>
<dbReference type="RefSeq" id="WP_002232040.1">
    <property type="nucleotide sequence ID" value="NC_003116.1"/>
</dbReference>
<dbReference type="SMR" id="P66273"/>
<dbReference type="EnsemblBacteria" id="CAM08158">
    <property type="protein sequence ID" value="CAM08158"/>
    <property type="gene ID" value="NMA0931"/>
</dbReference>
<dbReference type="GeneID" id="93386452"/>
<dbReference type="KEGG" id="nma:NMA0931"/>
<dbReference type="HOGENOM" id="CLU_169643_1_0_4"/>
<dbReference type="Proteomes" id="UP000000626">
    <property type="component" value="Chromosome"/>
</dbReference>
<dbReference type="GO" id="GO:0022625">
    <property type="term" value="C:cytosolic large ribosomal subunit"/>
    <property type="evidence" value="ECO:0007669"/>
    <property type="project" value="TreeGrafter"/>
</dbReference>
<dbReference type="GO" id="GO:0003735">
    <property type="term" value="F:structural constituent of ribosome"/>
    <property type="evidence" value="ECO:0007669"/>
    <property type="project" value="InterPro"/>
</dbReference>
<dbReference type="GO" id="GO:0006412">
    <property type="term" value="P:translation"/>
    <property type="evidence" value="ECO:0007669"/>
    <property type="project" value="UniProtKB-UniRule"/>
</dbReference>
<dbReference type="FunFam" id="4.10.410.60:FF:000001">
    <property type="entry name" value="50S ribosomal protein L35"/>
    <property type="match status" value="1"/>
</dbReference>
<dbReference type="Gene3D" id="4.10.410.60">
    <property type="match status" value="1"/>
</dbReference>
<dbReference type="HAMAP" id="MF_00514">
    <property type="entry name" value="Ribosomal_bL35"/>
    <property type="match status" value="1"/>
</dbReference>
<dbReference type="InterPro" id="IPR001706">
    <property type="entry name" value="Ribosomal_bL35"/>
</dbReference>
<dbReference type="InterPro" id="IPR021137">
    <property type="entry name" value="Ribosomal_bL35-like"/>
</dbReference>
<dbReference type="InterPro" id="IPR018265">
    <property type="entry name" value="Ribosomal_bL35_CS"/>
</dbReference>
<dbReference type="InterPro" id="IPR037229">
    <property type="entry name" value="Ribosomal_bL35_sf"/>
</dbReference>
<dbReference type="NCBIfam" id="TIGR00001">
    <property type="entry name" value="rpmI_bact"/>
    <property type="match status" value="1"/>
</dbReference>
<dbReference type="PANTHER" id="PTHR33343">
    <property type="entry name" value="54S RIBOSOMAL PROTEIN BL35M"/>
    <property type="match status" value="1"/>
</dbReference>
<dbReference type="PANTHER" id="PTHR33343:SF1">
    <property type="entry name" value="LARGE RIBOSOMAL SUBUNIT PROTEIN BL35M"/>
    <property type="match status" value="1"/>
</dbReference>
<dbReference type="Pfam" id="PF01632">
    <property type="entry name" value="Ribosomal_L35p"/>
    <property type="match status" value="1"/>
</dbReference>
<dbReference type="PRINTS" id="PR00064">
    <property type="entry name" value="RIBOSOMALL35"/>
</dbReference>
<dbReference type="SUPFAM" id="SSF143034">
    <property type="entry name" value="L35p-like"/>
    <property type="match status" value="1"/>
</dbReference>
<dbReference type="PROSITE" id="PS00936">
    <property type="entry name" value="RIBOSOMAL_L35"/>
    <property type="match status" value="1"/>
</dbReference>
<organism>
    <name type="scientific">Neisseria meningitidis serogroup A / serotype 4A (strain DSM 15465 / Z2491)</name>
    <dbReference type="NCBI Taxonomy" id="122587"/>
    <lineage>
        <taxon>Bacteria</taxon>
        <taxon>Pseudomonadati</taxon>
        <taxon>Pseudomonadota</taxon>
        <taxon>Betaproteobacteria</taxon>
        <taxon>Neisseriales</taxon>
        <taxon>Neisseriaceae</taxon>
        <taxon>Neisseria</taxon>
    </lineage>
</organism>
<accession>P66273</accession>
<accession>A1IQX4</accession>
<accession>Q9JQN7</accession>
<name>RL35_NEIMA</name>
<evidence type="ECO:0000255" key="1">
    <source>
        <dbReference type="HAMAP-Rule" id="MF_00514"/>
    </source>
</evidence>
<evidence type="ECO:0000305" key="2"/>
<gene>
    <name evidence="1" type="primary">rpmI</name>
    <name type="ordered locus">NMA0931</name>
</gene>
<keyword id="KW-0687">Ribonucleoprotein</keyword>
<keyword id="KW-0689">Ribosomal protein</keyword>
<reference key="1">
    <citation type="journal article" date="2000" name="Nature">
        <title>Complete DNA sequence of a serogroup A strain of Neisseria meningitidis Z2491.</title>
        <authorList>
            <person name="Parkhill J."/>
            <person name="Achtman M."/>
            <person name="James K.D."/>
            <person name="Bentley S.D."/>
            <person name="Churcher C.M."/>
            <person name="Klee S.R."/>
            <person name="Morelli G."/>
            <person name="Basham D."/>
            <person name="Brown D."/>
            <person name="Chillingworth T."/>
            <person name="Davies R.M."/>
            <person name="Davis P."/>
            <person name="Devlin K."/>
            <person name="Feltwell T."/>
            <person name="Hamlin N."/>
            <person name="Holroyd S."/>
            <person name="Jagels K."/>
            <person name="Leather S."/>
            <person name="Moule S."/>
            <person name="Mungall K.L."/>
            <person name="Quail M.A."/>
            <person name="Rajandream M.A."/>
            <person name="Rutherford K.M."/>
            <person name="Simmonds M."/>
            <person name="Skelton J."/>
            <person name="Whitehead S."/>
            <person name="Spratt B.G."/>
            <person name="Barrell B.G."/>
        </authorList>
    </citation>
    <scope>NUCLEOTIDE SEQUENCE [LARGE SCALE GENOMIC DNA]</scope>
    <source>
        <strain>DSM 15465 / Z2491</strain>
    </source>
</reference>
<comment type="similarity">
    <text evidence="1">Belongs to the bacterial ribosomal protein bL35 family.</text>
</comment>
<protein>
    <recommendedName>
        <fullName evidence="1">Large ribosomal subunit protein bL35</fullName>
    </recommendedName>
    <alternativeName>
        <fullName evidence="2">50S ribosomal protein L35</fullName>
    </alternativeName>
</protein>
<feature type="chain" id="PRO_0000177389" description="Large ribosomal subunit protein bL35">
    <location>
        <begin position="1"/>
        <end position="65"/>
    </location>
</feature>